<organism>
    <name type="scientific">Campylobacter jejuni subsp. jejuni serotype O:6 (strain 81116 / NCTC 11828)</name>
    <dbReference type="NCBI Taxonomy" id="407148"/>
    <lineage>
        <taxon>Bacteria</taxon>
        <taxon>Pseudomonadati</taxon>
        <taxon>Campylobacterota</taxon>
        <taxon>Epsilonproteobacteria</taxon>
        <taxon>Campylobacterales</taxon>
        <taxon>Campylobacteraceae</taxon>
        <taxon>Campylobacter</taxon>
    </lineage>
</organism>
<feature type="chain" id="PRO_0000323625" description="DNA-directed RNA polymerase subunit alpha">
    <location>
        <begin position="1"/>
        <end position="337"/>
    </location>
</feature>
<feature type="region of interest" description="Alpha N-terminal domain (alpha-NTD)" evidence="1">
    <location>
        <begin position="1"/>
        <end position="231"/>
    </location>
</feature>
<feature type="region of interest" description="Alpha C-terminal domain (alpha-CTD)" evidence="1">
    <location>
        <begin position="248"/>
        <end position="337"/>
    </location>
</feature>
<keyword id="KW-0240">DNA-directed RNA polymerase</keyword>
<keyword id="KW-0548">Nucleotidyltransferase</keyword>
<keyword id="KW-0804">Transcription</keyword>
<keyword id="KW-0808">Transferase</keyword>
<evidence type="ECO:0000255" key="1">
    <source>
        <dbReference type="HAMAP-Rule" id="MF_00059"/>
    </source>
</evidence>
<comment type="function">
    <text evidence="1">DNA-dependent RNA polymerase catalyzes the transcription of DNA into RNA using the four ribonucleoside triphosphates as substrates.</text>
</comment>
<comment type="catalytic activity">
    <reaction evidence="1">
        <text>RNA(n) + a ribonucleoside 5'-triphosphate = RNA(n+1) + diphosphate</text>
        <dbReference type="Rhea" id="RHEA:21248"/>
        <dbReference type="Rhea" id="RHEA-COMP:14527"/>
        <dbReference type="Rhea" id="RHEA-COMP:17342"/>
        <dbReference type="ChEBI" id="CHEBI:33019"/>
        <dbReference type="ChEBI" id="CHEBI:61557"/>
        <dbReference type="ChEBI" id="CHEBI:140395"/>
        <dbReference type="EC" id="2.7.7.6"/>
    </reaction>
</comment>
<comment type="subunit">
    <text evidence="1">Homodimer. The RNAP catalytic core consists of 2 alpha, 1 beta, 1 beta' and 1 omega subunit. When a sigma factor is associated with the core the holoenzyme is formed, which can initiate transcription.</text>
</comment>
<comment type="domain">
    <text evidence="1">The N-terminal domain is essential for RNAP assembly and basal transcription, whereas the C-terminal domain is involved in interaction with transcriptional regulators and with upstream promoter elements.</text>
</comment>
<comment type="similarity">
    <text evidence="1">Belongs to the RNA polymerase alpha chain family.</text>
</comment>
<reference key="1">
    <citation type="journal article" date="2007" name="J. Bacteriol.">
        <title>The complete genome sequence of Campylobacter jejuni strain 81116 (NCTC11828).</title>
        <authorList>
            <person name="Pearson B.M."/>
            <person name="Gaskin D.J.H."/>
            <person name="Segers R.P.A.M."/>
            <person name="Wells J.M."/>
            <person name="Nuijten P.J.M."/>
            <person name="van Vliet A.H.M."/>
        </authorList>
    </citation>
    <scope>NUCLEOTIDE SEQUENCE [LARGE SCALE GENOMIC DNA]</scope>
    <source>
        <strain>81116 / NCTC 11828</strain>
    </source>
</reference>
<proteinExistence type="inferred from homology"/>
<name>RPOA_CAMJ8</name>
<accession>A8FNQ7</accession>
<sequence>MRNITTSAYTPTEFTIENISDTVAKISAWPFEIGYGITLAHPLRRLLYTSTIGYAPTAIHIDGVAHEFDSMRGMLEDVALFIINLKKLRFKIKGESNKEIVEFSFKGSKEIYGKDLNNDQVEVVNKDAYLATINEDAELKFTLIVEKGIGYVPSEEIKELINDPKFIALDAFFTPVREATYDIEKVLFEDNPDYEKVVLTVTTDGQITPNEAFQNALEAMYKQLSVFDKITNVRSVIKNQATSNELENTKLLQNITDLNLSARSYNCLEKAGVVYIGELALMSVSELAGLKNLGKKSLDEIKNIMESIGFPVGTSKLSDNKEILKNKIAELKAQNEG</sequence>
<protein>
    <recommendedName>
        <fullName evidence="1">DNA-directed RNA polymerase subunit alpha</fullName>
        <shortName evidence="1">RNAP subunit alpha</shortName>
        <ecNumber evidence="1">2.7.7.6</ecNumber>
    </recommendedName>
    <alternativeName>
        <fullName evidence="1">RNA polymerase subunit alpha</fullName>
    </alternativeName>
    <alternativeName>
        <fullName evidence="1">Transcriptase subunit alpha</fullName>
    </alternativeName>
</protein>
<gene>
    <name evidence="1" type="primary">rpoA</name>
    <name type="ordered locus">C8J_1497</name>
</gene>
<dbReference type="EC" id="2.7.7.6" evidence="1"/>
<dbReference type="EMBL" id="CP000814">
    <property type="protein sequence ID" value="ABV53094.1"/>
    <property type="molecule type" value="Genomic_DNA"/>
</dbReference>
<dbReference type="RefSeq" id="WP_002855748.1">
    <property type="nucleotide sequence ID" value="NC_009839.1"/>
</dbReference>
<dbReference type="SMR" id="A8FNQ7"/>
<dbReference type="KEGG" id="cju:C8J_1497"/>
<dbReference type="HOGENOM" id="CLU_053084_0_1_7"/>
<dbReference type="GO" id="GO:0005737">
    <property type="term" value="C:cytoplasm"/>
    <property type="evidence" value="ECO:0007669"/>
    <property type="project" value="UniProtKB-ARBA"/>
</dbReference>
<dbReference type="GO" id="GO:0000428">
    <property type="term" value="C:DNA-directed RNA polymerase complex"/>
    <property type="evidence" value="ECO:0007669"/>
    <property type="project" value="UniProtKB-KW"/>
</dbReference>
<dbReference type="GO" id="GO:0003677">
    <property type="term" value="F:DNA binding"/>
    <property type="evidence" value="ECO:0007669"/>
    <property type="project" value="UniProtKB-UniRule"/>
</dbReference>
<dbReference type="GO" id="GO:0003899">
    <property type="term" value="F:DNA-directed RNA polymerase activity"/>
    <property type="evidence" value="ECO:0007669"/>
    <property type="project" value="UniProtKB-UniRule"/>
</dbReference>
<dbReference type="GO" id="GO:0046983">
    <property type="term" value="F:protein dimerization activity"/>
    <property type="evidence" value="ECO:0007669"/>
    <property type="project" value="InterPro"/>
</dbReference>
<dbReference type="GO" id="GO:0006351">
    <property type="term" value="P:DNA-templated transcription"/>
    <property type="evidence" value="ECO:0007669"/>
    <property type="project" value="UniProtKB-UniRule"/>
</dbReference>
<dbReference type="CDD" id="cd06928">
    <property type="entry name" value="RNAP_alpha_NTD"/>
    <property type="match status" value="1"/>
</dbReference>
<dbReference type="Gene3D" id="1.10.150.20">
    <property type="entry name" value="5' to 3' exonuclease, C-terminal subdomain"/>
    <property type="match status" value="1"/>
</dbReference>
<dbReference type="Gene3D" id="2.170.120.12">
    <property type="entry name" value="DNA-directed RNA polymerase, insert domain"/>
    <property type="match status" value="1"/>
</dbReference>
<dbReference type="Gene3D" id="3.30.1360.10">
    <property type="entry name" value="RNA polymerase, RBP11-like subunit"/>
    <property type="match status" value="1"/>
</dbReference>
<dbReference type="HAMAP" id="MF_00059">
    <property type="entry name" value="RNApol_bact_RpoA"/>
    <property type="match status" value="1"/>
</dbReference>
<dbReference type="InterPro" id="IPR011262">
    <property type="entry name" value="DNA-dir_RNA_pol_insert"/>
</dbReference>
<dbReference type="InterPro" id="IPR011263">
    <property type="entry name" value="DNA-dir_RNA_pol_RpoA/D/Rpb3"/>
</dbReference>
<dbReference type="InterPro" id="IPR011773">
    <property type="entry name" value="DNA-dir_RpoA"/>
</dbReference>
<dbReference type="InterPro" id="IPR036603">
    <property type="entry name" value="RBP11-like"/>
</dbReference>
<dbReference type="InterPro" id="IPR011260">
    <property type="entry name" value="RNAP_asu_C"/>
</dbReference>
<dbReference type="InterPro" id="IPR036643">
    <property type="entry name" value="RNApol_insert_sf"/>
</dbReference>
<dbReference type="NCBIfam" id="NF003517">
    <property type="entry name" value="PRK05182.2-3"/>
    <property type="match status" value="1"/>
</dbReference>
<dbReference type="NCBIfam" id="NF003519">
    <property type="entry name" value="PRK05182.2-5"/>
    <property type="match status" value="1"/>
</dbReference>
<dbReference type="NCBIfam" id="TIGR02027">
    <property type="entry name" value="rpoA"/>
    <property type="match status" value="1"/>
</dbReference>
<dbReference type="Pfam" id="PF01000">
    <property type="entry name" value="RNA_pol_A_bac"/>
    <property type="match status" value="1"/>
</dbReference>
<dbReference type="Pfam" id="PF03118">
    <property type="entry name" value="RNA_pol_A_CTD"/>
    <property type="match status" value="1"/>
</dbReference>
<dbReference type="Pfam" id="PF01193">
    <property type="entry name" value="RNA_pol_L"/>
    <property type="match status" value="1"/>
</dbReference>
<dbReference type="SMART" id="SM00662">
    <property type="entry name" value="RPOLD"/>
    <property type="match status" value="1"/>
</dbReference>
<dbReference type="SUPFAM" id="SSF47789">
    <property type="entry name" value="C-terminal domain of RNA polymerase alpha subunit"/>
    <property type="match status" value="1"/>
</dbReference>
<dbReference type="SUPFAM" id="SSF56553">
    <property type="entry name" value="Insert subdomain of RNA polymerase alpha subunit"/>
    <property type="match status" value="1"/>
</dbReference>
<dbReference type="SUPFAM" id="SSF55257">
    <property type="entry name" value="RBP11-like subunits of RNA polymerase"/>
    <property type="match status" value="1"/>
</dbReference>